<dbReference type="EMBL" id="AC149210">
    <property type="protein sequence ID" value="ABD32280.1"/>
    <property type="molecule type" value="Genomic_DNA"/>
</dbReference>
<dbReference type="RefSeq" id="XP_003597343.1">
    <property type="nucleotide sequence ID" value="XM_003597295.2"/>
</dbReference>
<dbReference type="SMR" id="Q2HU65"/>
<dbReference type="PaxDb" id="3880-AES67594"/>
<dbReference type="EnsemblPlants" id="rna12333">
    <property type="protein sequence ID" value="RHN76059.1"/>
    <property type="gene ID" value="gene12333"/>
</dbReference>
<dbReference type="Gramene" id="rna12333">
    <property type="protein sequence ID" value="RHN76059.1"/>
    <property type="gene ID" value="gene12333"/>
</dbReference>
<dbReference type="KEGG" id="mtr:11417382"/>
<dbReference type="eggNOG" id="KOG1756">
    <property type="taxonomic scope" value="Eukaryota"/>
</dbReference>
<dbReference type="HOGENOM" id="CLU_062828_1_1_1"/>
<dbReference type="OMA" id="FTCLCGF"/>
<dbReference type="OrthoDB" id="9421954at2759"/>
<dbReference type="ExpressionAtlas" id="Q2HU65">
    <property type="expression patterns" value="differential"/>
</dbReference>
<dbReference type="GO" id="GO:0000786">
    <property type="term" value="C:nucleosome"/>
    <property type="evidence" value="ECO:0007669"/>
    <property type="project" value="UniProtKB-KW"/>
</dbReference>
<dbReference type="GO" id="GO:0005634">
    <property type="term" value="C:nucleus"/>
    <property type="evidence" value="ECO:0007669"/>
    <property type="project" value="UniProtKB-SubCell"/>
</dbReference>
<dbReference type="GO" id="GO:0003677">
    <property type="term" value="F:DNA binding"/>
    <property type="evidence" value="ECO:0007669"/>
    <property type="project" value="UniProtKB-KW"/>
</dbReference>
<dbReference type="GO" id="GO:0046982">
    <property type="term" value="F:protein heterodimerization activity"/>
    <property type="evidence" value="ECO:0007669"/>
    <property type="project" value="InterPro"/>
</dbReference>
<dbReference type="GO" id="GO:0030527">
    <property type="term" value="F:structural constituent of chromatin"/>
    <property type="evidence" value="ECO:0007669"/>
    <property type="project" value="InterPro"/>
</dbReference>
<dbReference type="CDD" id="cd00074">
    <property type="entry name" value="HFD_H2A"/>
    <property type="match status" value="1"/>
</dbReference>
<dbReference type="FunFam" id="1.10.20.10:FF:000026">
    <property type="entry name" value="Histone H2A"/>
    <property type="match status" value="1"/>
</dbReference>
<dbReference type="Gene3D" id="1.10.20.10">
    <property type="entry name" value="Histone, subunit A"/>
    <property type="match status" value="1"/>
</dbReference>
<dbReference type="InterPro" id="IPR009072">
    <property type="entry name" value="Histone-fold"/>
</dbReference>
<dbReference type="InterPro" id="IPR002119">
    <property type="entry name" value="Histone_H2A"/>
</dbReference>
<dbReference type="InterPro" id="IPR007125">
    <property type="entry name" value="Histone_H2A/H2B/H3"/>
</dbReference>
<dbReference type="InterPro" id="IPR032454">
    <property type="entry name" value="Histone_H2A_C"/>
</dbReference>
<dbReference type="InterPro" id="IPR032458">
    <property type="entry name" value="Histone_H2A_CS"/>
</dbReference>
<dbReference type="PANTHER" id="PTHR23430">
    <property type="entry name" value="HISTONE H2A"/>
    <property type="match status" value="1"/>
</dbReference>
<dbReference type="Pfam" id="PF00125">
    <property type="entry name" value="Histone"/>
    <property type="match status" value="1"/>
</dbReference>
<dbReference type="Pfam" id="PF16211">
    <property type="entry name" value="Histone_H2A_C"/>
    <property type="match status" value="1"/>
</dbReference>
<dbReference type="PRINTS" id="PR00620">
    <property type="entry name" value="HISTONEH2A"/>
</dbReference>
<dbReference type="SMART" id="SM00414">
    <property type="entry name" value="H2A"/>
    <property type="match status" value="1"/>
</dbReference>
<dbReference type="SUPFAM" id="SSF47113">
    <property type="entry name" value="Histone-fold"/>
    <property type="match status" value="1"/>
</dbReference>
<dbReference type="PROSITE" id="PS00046">
    <property type="entry name" value="HISTONE_H2A"/>
    <property type="match status" value="1"/>
</dbReference>
<sequence length="153" mass="16308">MDASTKTKKGAGGRKGGGPRKKSVTRSIRAGLQFPVGRIGRYLKKGRYAQRVGTGAPVYLAAVLEYLAAEVLELAGNAARDNKKNRIIPRHVLLAVRNDEELGKLLAGVTIAHGGVLPNINPVLLPKKTERSNTVSKEPKSPKPKAGKSPKKA</sequence>
<accession>Q2HU65</accession>
<gene>
    <name type="ORF">MtrDRAFT_AC149210g4v1</name>
</gene>
<feature type="chain" id="PRO_0000239993" description="Probable histone H2A.2">
    <location>
        <begin position="1"/>
        <end position="153"/>
    </location>
</feature>
<feature type="region of interest" description="Disordered" evidence="2">
    <location>
        <begin position="1"/>
        <end position="24"/>
    </location>
</feature>
<feature type="region of interest" description="Disordered" evidence="2">
    <location>
        <begin position="127"/>
        <end position="153"/>
    </location>
</feature>
<feature type="short sequence motif" description="SPKK motif">
    <location>
        <begin position="149"/>
        <end position="152"/>
    </location>
</feature>
<feature type="compositionally biased region" description="Basic and acidic residues" evidence="2">
    <location>
        <begin position="127"/>
        <end position="141"/>
    </location>
</feature>
<feature type="compositionally biased region" description="Basic residues" evidence="2">
    <location>
        <begin position="142"/>
        <end position="153"/>
    </location>
</feature>
<evidence type="ECO:0000250" key="1"/>
<evidence type="ECO:0000256" key="2">
    <source>
        <dbReference type="SAM" id="MobiDB-lite"/>
    </source>
</evidence>
<evidence type="ECO:0000305" key="3"/>
<keyword id="KW-0158">Chromosome</keyword>
<keyword id="KW-0238">DNA-binding</keyword>
<keyword id="KW-0544">Nucleosome core</keyword>
<keyword id="KW-0539">Nucleus</keyword>
<comment type="function">
    <text>Core component of nucleosome. Nucleosomes wrap and compact DNA into chromatin, limiting DNA accessibility to the cellular machineries which require DNA as a template. Histones thereby play a central role in transcription regulation, DNA repair, DNA replication and chromosomal stability. DNA accessibility is regulated via a complex set of post-translational modifications of histones, also called histone code, and nucleosome remodeling.</text>
</comment>
<comment type="subunit">
    <text>The nucleosome is a histone octamer containing two molecules each of H2A, H2B, H3 and H4 assembled in one H3-H4 heterotetramer and two H2A-H2B heterodimers. The octamer wraps approximately 147 bp of DNA.</text>
</comment>
<comment type="subcellular location">
    <subcellularLocation>
        <location evidence="1">Nucleus</location>
    </subcellularLocation>
    <subcellularLocation>
        <location evidence="1">Chromosome</location>
    </subcellularLocation>
</comment>
<comment type="domain">
    <text>Contains one SPKK motif which may interact with the minor groove of A/T-rich DNA sites. Phosphorylation of this motif may regulate DNA binding. This motif is reiterated in both termini of histone H1 and in the N-terminus of sea urchin histones H2B, but its presence in the C-terminus seems to be unique to plant H2A.</text>
</comment>
<comment type="similarity">
    <text evidence="3">Belongs to the histone H2A family.</text>
</comment>
<protein>
    <recommendedName>
        <fullName>Probable histone H2A.2</fullName>
    </recommendedName>
</protein>
<organism>
    <name type="scientific">Medicago truncatula</name>
    <name type="common">Barrel medic</name>
    <name type="synonym">Medicago tribuloides</name>
    <dbReference type="NCBI Taxonomy" id="3880"/>
    <lineage>
        <taxon>Eukaryota</taxon>
        <taxon>Viridiplantae</taxon>
        <taxon>Streptophyta</taxon>
        <taxon>Embryophyta</taxon>
        <taxon>Tracheophyta</taxon>
        <taxon>Spermatophyta</taxon>
        <taxon>Magnoliopsida</taxon>
        <taxon>eudicotyledons</taxon>
        <taxon>Gunneridae</taxon>
        <taxon>Pentapetalae</taxon>
        <taxon>rosids</taxon>
        <taxon>fabids</taxon>
        <taxon>Fabales</taxon>
        <taxon>Fabaceae</taxon>
        <taxon>Papilionoideae</taxon>
        <taxon>50 kb inversion clade</taxon>
        <taxon>NPAAA clade</taxon>
        <taxon>Hologalegina</taxon>
        <taxon>IRL clade</taxon>
        <taxon>Trifolieae</taxon>
        <taxon>Medicago</taxon>
    </lineage>
</organism>
<name>H2A2_MEDTR</name>
<reference key="1">
    <citation type="submission" date="2006-04" db="EMBL/GenBank/DDBJ databases">
        <authorList>
            <consortium name="The international Medicago genome annotation group"/>
        </authorList>
    </citation>
    <scope>NUCLEOTIDE SEQUENCE [LARGE SCALE GENOMIC DNA]</scope>
</reference>
<proteinExistence type="inferred from homology"/>